<feature type="chain" id="PRO_1000114732" description="Potassium-transporting ATPase KdpC subunit">
    <location>
        <begin position="1"/>
        <end position="214"/>
    </location>
</feature>
<feature type="transmembrane region" description="Helical" evidence="1">
    <location>
        <begin position="17"/>
        <end position="37"/>
    </location>
</feature>
<keyword id="KW-0067">ATP-binding</keyword>
<keyword id="KW-0997">Cell inner membrane</keyword>
<keyword id="KW-1003">Cell membrane</keyword>
<keyword id="KW-0406">Ion transport</keyword>
<keyword id="KW-0472">Membrane</keyword>
<keyword id="KW-0547">Nucleotide-binding</keyword>
<keyword id="KW-0630">Potassium</keyword>
<keyword id="KW-0633">Potassium transport</keyword>
<keyword id="KW-0812">Transmembrane</keyword>
<keyword id="KW-1133">Transmembrane helix</keyword>
<keyword id="KW-0813">Transport</keyword>
<comment type="function">
    <text evidence="1">Part of the high-affinity ATP-driven potassium transport (or Kdp) system, which catalyzes the hydrolysis of ATP coupled with the electrogenic transport of potassium into the cytoplasm. This subunit acts as a catalytic chaperone that increases the ATP-binding affinity of the ATP-hydrolyzing subunit KdpB by the formation of a transient KdpB/KdpC/ATP ternary complex.</text>
</comment>
<comment type="subunit">
    <text evidence="1">The system is composed of three essential subunits: KdpA, KdpB and KdpC.</text>
</comment>
<comment type="subcellular location">
    <subcellularLocation>
        <location evidence="1">Cell inner membrane</location>
        <topology evidence="1">Single-pass membrane protein</topology>
    </subcellularLocation>
</comment>
<comment type="similarity">
    <text evidence="1">Belongs to the KdpC family.</text>
</comment>
<dbReference type="EMBL" id="AP009552">
    <property type="protein sequence ID" value="BAG05809.1"/>
    <property type="molecule type" value="Genomic_DNA"/>
</dbReference>
<dbReference type="RefSeq" id="WP_012268157.1">
    <property type="nucleotide sequence ID" value="NC_010296.1"/>
</dbReference>
<dbReference type="SMR" id="B0JJA1"/>
<dbReference type="STRING" id="449447.MAE_59870"/>
<dbReference type="PaxDb" id="449447-MAE_59870"/>
<dbReference type="EnsemblBacteria" id="BAG05809">
    <property type="protein sequence ID" value="BAG05809"/>
    <property type="gene ID" value="MAE_59870"/>
</dbReference>
<dbReference type="KEGG" id="mar:MAE_59870"/>
<dbReference type="PATRIC" id="fig|449447.4.peg.5484"/>
<dbReference type="eggNOG" id="COG2156">
    <property type="taxonomic scope" value="Bacteria"/>
</dbReference>
<dbReference type="HOGENOM" id="CLU_077094_2_0_3"/>
<dbReference type="BioCyc" id="MAER449447:MAE_RS26120-MONOMER"/>
<dbReference type="Proteomes" id="UP000001510">
    <property type="component" value="Chromosome"/>
</dbReference>
<dbReference type="GO" id="GO:0005886">
    <property type="term" value="C:plasma membrane"/>
    <property type="evidence" value="ECO:0007669"/>
    <property type="project" value="UniProtKB-SubCell"/>
</dbReference>
<dbReference type="GO" id="GO:0005524">
    <property type="term" value="F:ATP binding"/>
    <property type="evidence" value="ECO:0007669"/>
    <property type="project" value="UniProtKB-UniRule"/>
</dbReference>
<dbReference type="GO" id="GO:0008556">
    <property type="term" value="F:P-type potassium transmembrane transporter activity"/>
    <property type="evidence" value="ECO:0007669"/>
    <property type="project" value="InterPro"/>
</dbReference>
<dbReference type="HAMAP" id="MF_00276">
    <property type="entry name" value="KdpC"/>
    <property type="match status" value="1"/>
</dbReference>
<dbReference type="InterPro" id="IPR003820">
    <property type="entry name" value="KdpC"/>
</dbReference>
<dbReference type="NCBIfam" id="TIGR00681">
    <property type="entry name" value="kdpC"/>
    <property type="match status" value="1"/>
</dbReference>
<dbReference type="NCBIfam" id="NF001454">
    <property type="entry name" value="PRK00315.1"/>
    <property type="match status" value="1"/>
</dbReference>
<dbReference type="NCBIfam" id="NF010607">
    <property type="entry name" value="PRK14003.1"/>
    <property type="match status" value="1"/>
</dbReference>
<dbReference type="PANTHER" id="PTHR30042">
    <property type="entry name" value="POTASSIUM-TRANSPORTING ATPASE C CHAIN"/>
    <property type="match status" value="1"/>
</dbReference>
<dbReference type="PANTHER" id="PTHR30042:SF2">
    <property type="entry name" value="POTASSIUM-TRANSPORTING ATPASE KDPC SUBUNIT"/>
    <property type="match status" value="1"/>
</dbReference>
<dbReference type="Pfam" id="PF02669">
    <property type="entry name" value="KdpC"/>
    <property type="match status" value="1"/>
</dbReference>
<dbReference type="PIRSF" id="PIRSF001296">
    <property type="entry name" value="K_ATPase_KdpC"/>
    <property type="match status" value="1"/>
</dbReference>
<sequence length="214" mass="22983">MSFAREAGRAIRSTLVLWVITALIYPFSMIAIGQILFPWQANGSLITNNQGQVVGSALIGQPFISDRYFNSRPSTTNYSTADPKNDPNKVLQTGISGASNLAPSNPALIDRIKGKPDPDPAKAIQGEIPRLEKGAIKPTAALVYTSGSGLDPHITPEAARAQIERVARVRGLPTNQVEILVTKNTDERFLGIFGEPGVNLLKLNLALDAIANTR</sequence>
<name>KDPC_MICAN</name>
<accession>B0JJA1</accession>
<organism>
    <name type="scientific">Microcystis aeruginosa (strain NIES-843 / IAM M-2473)</name>
    <dbReference type="NCBI Taxonomy" id="449447"/>
    <lineage>
        <taxon>Bacteria</taxon>
        <taxon>Bacillati</taxon>
        <taxon>Cyanobacteriota</taxon>
        <taxon>Cyanophyceae</taxon>
        <taxon>Oscillatoriophycideae</taxon>
        <taxon>Chroococcales</taxon>
        <taxon>Microcystaceae</taxon>
        <taxon>Microcystis</taxon>
    </lineage>
</organism>
<protein>
    <recommendedName>
        <fullName evidence="1">Potassium-transporting ATPase KdpC subunit</fullName>
    </recommendedName>
    <alternativeName>
        <fullName evidence="1">ATP phosphohydrolase [potassium-transporting] C chain</fullName>
    </alternativeName>
    <alternativeName>
        <fullName evidence="1">Potassium-binding and translocating subunit C</fullName>
    </alternativeName>
    <alternativeName>
        <fullName evidence="1">Potassium-translocating ATPase C chain</fullName>
    </alternativeName>
</protein>
<gene>
    <name evidence="1" type="primary">kdpC</name>
    <name type="ordered locus">MAE_59870</name>
</gene>
<proteinExistence type="inferred from homology"/>
<evidence type="ECO:0000255" key="1">
    <source>
        <dbReference type="HAMAP-Rule" id="MF_00276"/>
    </source>
</evidence>
<reference key="1">
    <citation type="journal article" date="2007" name="DNA Res.">
        <title>Complete genomic structure of the bloom-forming toxic cyanobacterium Microcystis aeruginosa NIES-843.</title>
        <authorList>
            <person name="Kaneko T."/>
            <person name="Nakajima N."/>
            <person name="Okamoto S."/>
            <person name="Suzuki I."/>
            <person name="Tanabe Y."/>
            <person name="Tamaoki M."/>
            <person name="Nakamura Y."/>
            <person name="Kasai F."/>
            <person name="Watanabe A."/>
            <person name="Kawashima K."/>
            <person name="Kishida Y."/>
            <person name="Ono A."/>
            <person name="Shimizu Y."/>
            <person name="Takahashi C."/>
            <person name="Minami C."/>
            <person name="Fujishiro T."/>
            <person name="Kohara M."/>
            <person name="Katoh M."/>
            <person name="Nakazaki N."/>
            <person name="Nakayama S."/>
            <person name="Yamada M."/>
            <person name="Tabata S."/>
            <person name="Watanabe M.M."/>
        </authorList>
    </citation>
    <scope>NUCLEOTIDE SEQUENCE [LARGE SCALE GENOMIC DNA]</scope>
    <source>
        <strain>NIES-843 / IAM M-247</strain>
    </source>
</reference>